<comment type="function">
    <text evidence="3">Catalyzes the ATP-dependent phosphorylation of fructose-l-phosphate to fructose-l,6-bisphosphate. Involved in the utilization of fructose as a sole carbon and energy source.</text>
</comment>
<comment type="catalytic activity">
    <reaction evidence="3">
        <text>beta-D-fructose 1-phosphate + ATP = beta-D-fructose 1,6-bisphosphate + ADP + H(+)</text>
        <dbReference type="Rhea" id="RHEA:14213"/>
        <dbReference type="ChEBI" id="CHEBI:15378"/>
        <dbReference type="ChEBI" id="CHEBI:30616"/>
        <dbReference type="ChEBI" id="CHEBI:32966"/>
        <dbReference type="ChEBI" id="CHEBI:138881"/>
        <dbReference type="ChEBI" id="CHEBI:456216"/>
        <dbReference type="EC" id="2.7.1.56"/>
    </reaction>
</comment>
<comment type="biophysicochemical properties">
    <kinetics>
        <KM evidence="3">0.31 mM for fructose-1-phosphate</KM>
        <KM evidence="3">1.12 mM for fructose-6-phosphate</KM>
        <KM evidence="3">0.08 mM for ATP</KM>
        <Vmax evidence="3">308.0 umol/min/mg enzyme toward fructose-1-phosphate</Vmax>
        <Vmax evidence="3">30.7 umol/min/mg enzyme toward fructose-6-phosphate</Vmax>
        <Vmax evidence="3">200.0 umol/min/mg enzyme toward ATP</Vmax>
    </kinetics>
    <phDependence>
        <text evidence="3">Optimum pH is between 7.5 and 9.</text>
    </phDependence>
</comment>
<comment type="subunit">
    <text evidence="3">Homodimer.</text>
</comment>
<comment type="induction">
    <text evidence="3">Expression is highly up-regulated in presence of fructose.</text>
</comment>
<comment type="disruption phenotype">
    <text evidence="3">Loss of growth on fructose. Growth on glucose is not affected.</text>
</comment>
<comment type="similarity">
    <text evidence="5">Belongs to the carbohydrate kinase PfkB family.</text>
</comment>
<accession>D4GYE6</accession>
<keyword id="KW-0067">ATP-binding</keyword>
<keyword id="KW-0418">Kinase</keyword>
<keyword id="KW-0547">Nucleotide-binding</keyword>
<keyword id="KW-1185">Reference proteome</keyword>
<keyword id="KW-0808">Transferase</keyword>
<name>K1PF_HALVD</name>
<protein>
    <recommendedName>
        <fullName evidence="5">1-phosphofructokinase</fullName>
        <ecNumber evidence="3">2.7.1.56</ecNumber>
    </recommendedName>
    <alternativeName>
        <fullName evidence="4">Fructose 1-phosphate kinase</fullName>
        <shortName evidence="2">Fru1PK</shortName>
    </alternativeName>
</protein>
<reference key="1">
    <citation type="journal article" date="2010" name="PLoS ONE">
        <title>The complete genome sequence of Haloferax volcanii DS2, a model archaeon.</title>
        <authorList>
            <person name="Hartman A.L."/>
            <person name="Norais C."/>
            <person name="Badger J.H."/>
            <person name="Delmas S."/>
            <person name="Haldenby S."/>
            <person name="Madupu R."/>
            <person name="Robinson J."/>
            <person name="Khouri H."/>
            <person name="Ren Q."/>
            <person name="Lowe T.M."/>
            <person name="Maupin-Furlow J."/>
            <person name="Pohlschroder M."/>
            <person name="Daniels C."/>
            <person name="Pfeiffer F."/>
            <person name="Allers T."/>
            <person name="Eisen J.A."/>
        </authorList>
    </citation>
    <scope>NUCLEOTIDE SEQUENCE [LARGE SCALE GENOMIC DNA]</scope>
    <source>
        <strain>ATCC 29605 / DSM 3757 / JCM 8879 / NBRC 14742 / NCIMB 2012 / VKM B-1768 / DS2</strain>
    </source>
</reference>
<reference key="2">
    <citation type="journal article" date="2014" name="PLoS Genet.">
        <title>Phylogenetically driven sequencing of extremely halophilic archaea reveals strategies for static and dynamic osmo-response.</title>
        <authorList>
            <person name="Becker E.A."/>
            <person name="Seitzer P.M."/>
            <person name="Tritt A."/>
            <person name="Larsen D."/>
            <person name="Krusor M."/>
            <person name="Yao A.I."/>
            <person name="Wu D."/>
            <person name="Madern D."/>
            <person name="Eisen J.A."/>
            <person name="Darling A.E."/>
            <person name="Facciotti M.T."/>
        </authorList>
    </citation>
    <scope>NUCLEOTIDE SEQUENCE [LARGE SCALE GENOMIC DNA]</scope>
    <source>
        <strain>ATCC 29605 / DSM 3757 / JCM 8879 / NBRC 14742 / NCIMB 2012 / VKM B-1768 / DS2</strain>
    </source>
</reference>
<reference key="3">
    <citation type="journal article" date="2012" name="J. Bacteriol.">
        <title>Fructose degradation in the haloarchaeon Haloferax volcanii involves a bacterial type phosphoenolpyruvate-dependent phosphotransferase system, fructose-1-phosphate kinase, and class II fructose-1,6-bisphosphate aldolase.</title>
        <authorList>
            <person name="Pickl A."/>
            <person name="Johnsen U."/>
            <person name="Schoenheit P."/>
        </authorList>
    </citation>
    <scope>INDUCTION</scope>
    <scope>DISRUPTION PHENOTYPE</scope>
    <scope>FUNCTION</scope>
    <scope>CATALYTIC ACTIVITY</scope>
    <scope>SUBUNIT</scope>
    <scope>BIOPHYSICOCHEMICAL PROPERTIES</scope>
    <source>
        <strain>DS2 / DS70</strain>
    </source>
</reference>
<sequence length="305" mass="32003">MILTVTPNPAVDHTIHFDEPLQTGVVHRTDDAVFTAGGKGINVAKYASALDADVTASGFLGGHFGKFVRDRLDADGIASDFVTVDADTRLNTTVLAADGEYKLNHNGPQIRAADVDELVETAQANEPDTLLVGGSLPPGMSLSDVDRLARAGDWKIAVDMGGEYLAELDADYYVCKPNRSELAAATGRTVETEADAVEAAEELHARGFEYVLASLGADGALLVTDDEVLSAPALDVEVVDTVGAGDAVMSGFLAAREHGLSDADALRMGVLTASRVVGVAGTRVPDLEDVLTNETHVEVTTVRTR</sequence>
<evidence type="ECO:0000250" key="1">
    <source>
        <dbReference type="UniProtKB" id="P0A9J6"/>
    </source>
</evidence>
<evidence type="ECO:0000250" key="2">
    <source>
        <dbReference type="UniProtKB" id="P0AEW9"/>
    </source>
</evidence>
<evidence type="ECO:0000269" key="3">
    <source>
    </source>
</evidence>
<evidence type="ECO:0000303" key="4">
    <source>
    </source>
</evidence>
<evidence type="ECO:0000305" key="5"/>
<feature type="chain" id="PRO_0000428980" description="1-phosphofructokinase">
    <location>
        <begin position="1"/>
        <end position="305"/>
    </location>
</feature>
<feature type="active site" description="Proton acceptor" evidence="1">
    <location>
        <position position="246"/>
    </location>
</feature>
<feature type="binding site" evidence="1">
    <location>
        <begin position="214"/>
        <end position="219"/>
    </location>
    <ligand>
        <name>ATP</name>
        <dbReference type="ChEBI" id="CHEBI:30616"/>
    </ligand>
</feature>
<feature type="binding site" evidence="1">
    <location>
        <begin position="245"/>
        <end position="246"/>
    </location>
    <ligand>
        <name>ATP</name>
        <dbReference type="ChEBI" id="CHEBI:30616"/>
    </ligand>
</feature>
<gene>
    <name type="primary">pfkB</name>
    <name type="ordered locus">HVO_1500</name>
    <name type="ORF">C498_11231</name>
</gene>
<proteinExistence type="evidence at protein level"/>
<dbReference type="EC" id="2.7.1.56" evidence="3"/>
<dbReference type="EMBL" id="CP001956">
    <property type="protein sequence ID" value="ADE02968.1"/>
    <property type="molecule type" value="Genomic_DNA"/>
</dbReference>
<dbReference type="EMBL" id="AOHU01000090">
    <property type="protein sequence ID" value="ELY28262.1"/>
    <property type="molecule type" value="Genomic_DNA"/>
</dbReference>
<dbReference type="RefSeq" id="WP_004043435.1">
    <property type="nucleotide sequence ID" value="NC_013967.1"/>
</dbReference>
<dbReference type="SMR" id="D4GYE6"/>
<dbReference type="STRING" id="309800.HVO_1500"/>
<dbReference type="PaxDb" id="309800-C498_11231"/>
<dbReference type="EnsemblBacteria" id="ADE02968">
    <property type="protein sequence ID" value="ADE02968"/>
    <property type="gene ID" value="HVO_1500"/>
</dbReference>
<dbReference type="GeneID" id="8926637"/>
<dbReference type="KEGG" id="hvo:HVO_1500"/>
<dbReference type="PATRIC" id="fig|309800.29.peg.2140"/>
<dbReference type="eggNOG" id="arCOG00015">
    <property type="taxonomic scope" value="Archaea"/>
</dbReference>
<dbReference type="HOGENOM" id="CLU_050013_0_0_2"/>
<dbReference type="OrthoDB" id="199813at2157"/>
<dbReference type="BRENDA" id="2.7.1.56">
    <property type="organism ID" value="2561"/>
</dbReference>
<dbReference type="Proteomes" id="UP000008243">
    <property type="component" value="Chromosome"/>
</dbReference>
<dbReference type="Proteomes" id="UP000011532">
    <property type="component" value="Unassembled WGS sequence"/>
</dbReference>
<dbReference type="GO" id="GO:0005829">
    <property type="term" value="C:cytosol"/>
    <property type="evidence" value="ECO:0007669"/>
    <property type="project" value="TreeGrafter"/>
</dbReference>
<dbReference type="GO" id="GO:0008662">
    <property type="term" value="F:1-phosphofructokinase activity"/>
    <property type="evidence" value="ECO:0007669"/>
    <property type="project" value="UniProtKB-EC"/>
</dbReference>
<dbReference type="GO" id="GO:0005524">
    <property type="term" value="F:ATP binding"/>
    <property type="evidence" value="ECO:0007669"/>
    <property type="project" value="UniProtKB-KW"/>
</dbReference>
<dbReference type="CDD" id="cd01164">
    <property type="entry name" value="FruK_PfkB_like"/>
    <property type="match status" value="1"/>
</dbReference>
<dbReference type="Gene3D" id="3.40.1190.20">
    <property type="match status" value="1"/>
</dbReference>
<dbReference type="InterPro" id="IPR002173">
    <property type="entry name" value="Carboh/pur_kinase_PfkB_CS"/>
</dbReference>
<dbReference type="InterPro" id="IPR011611">
    <property type="entry name" value="PfkB_dom"/>
</dbReference>
<dbReference type="InterPro" id="IPR054902">
    <property type="entry name" value="pfkB_Halo"/>
</dbReference>
<dbReference type="InterPro" id="IPR029056">
    <property type="entry name" value="Ribokinase-like"/>
</dbReference>
<dbReference type="InterPro" id="IPR017583">
    <property type="entry name" value="Tagatose/fructose_Pkinase"/>
</dbReference>
<dbReference type="NCBIfam" id="TIGR03168">
    <property type="entry name" value="1-PFK"/>
    <property type="match status" value="1"/>
</dbReference>
<dbReference type="NCBIfam" id="NF041320">
    <property type="entry name" value="pfkB_Halo"/>
    <property type="match status" value="1"/>
</dbReference>
<dbReference type="PANTHER" id="PTHR46566">
    <property type="entry name" value="1-PHOSPHOFRUCTOKINASE-RELATED"/>
    <property type="match status" value="1"/>
</dbReference>
<dbReference type="PANTHER" id="PTHR46566:SF2">
    <property type="entry name" value="ATP-DEPENDENT 6-PHOSPHOFRUCTOKINASE ISOZYME 2"/>
    <property type="match status" value="1"/>
</dbReference>
<dbReference type="Pfam" id="PF00294">
    <property type="entry name" value="PfkB"/>
    <property type="match status" value="1"/>
</dbReference>
<dbReference type="PIRSF" id="PIRSF000535">
    <property type="entry name" value="1PFK/6PFK/LacC"/>
    <property type="match status" value="1"/>
</dbReference>
<dbReference type="SUPFAM" id="SSF53613">
    <property type="entry name" value="Ribokinase-like"/>
    <property type="match status" value="1"/>
</dbReference>
<dbReference type="PROSITE" id="PS00584">
    <property type="entry name" value="PFKB_KINASES_2"/>
    <property type="match status" value="1"/>
</dbReference>
<organism>
    <name type="scientific">Haloferax volcanii (strain ATCC 29605 / DSM 3757 / JCM 8879 / NBRC 14742 / NCIMB 2012 / VKM B-1768 / DS2)</name>
    <name type="common">Halobacterium volcanii</name>
    <dbReference type="NCBI Taxonomy" id="309800"/>
    <lineage>
        <taxon>Archaea</taxon>
        <taxon>Methanobacteriati</taxon>
        <taxon>Methanobacteriota</taxon>
        <taxon>Stenosarchaea group</taxon>
        <taxon>Halobacteria</taxon>
        <taxon>Halobacteriales</taxon>
        <taxon>Haloferacaceae</taxon>
        <taxon>Haloferax</taxon>
    </lineage>
</organism>